<reference key="1">
    <citation type="journal article" date="1994" name="J. Bacteriol.">
        <title>Nucleotide sequence of the afimbrial-adhesin-encoding afa-3 gene cluster and its translocation via flanking IS1 insertion sequences.</title>
        <authorList>
            <person name="Garcia M.-I."/>
            <person name="Labigne A."/>
            <person name="le Bouguenec C.L."/>
        </authorList>
    </citation>
    <scope>NUCLEOTIDE SEQUENCE [GENOMIC DNA]</scope>
    <source>
        <strain>A30 / UPEC</strain>
    </source>
</reference>
<geneLocation type="plasmid">
    <name>pIL1055</name>
</geneLocation>
<name>INTL_ECOLX</name>
<gene>
    <name type="primary">int</name>
</gene>
<accession>Q47036</accession>
<proteinExistence type="inferred from homology"/>
<organism>
    <name type="scientific">Escherichia coli</name>
    <dbReference type="NCBI Taxonomy" id="562"/>
    <lineage>
        <taxon>Bacteria</taxon>
        <taxon>Pseudomonadati</taxon>
        <taxon>Pseudomonadota</taxon>
        <taxon>Gammaproteobacteria</taxon>
        <taxon>Enterobacterales</taxon>
        <taxon>Enterobacteriaceae</taxon>
        <taxon>Escherichia</taxon>
    </lineage>
</organism>
<evidence type="ECO:0000255" key="1">
    <source>
        <dbReference type="PROSITE-ProRule" id="PRU01246"/>
    </source>
</evidence>
<evidence type="ECO:0000305" key="2"/>
<protein>
    <recommendedName>
        <fullName>Probable site-specific recombinase in afa region</fullName>
    </recommendedName>
</protein>
<dbReference type="EMBL" id="X76688">
    <property type="protein sequence ID" value="CAA54111.1"/>
    <property type="molecule type" value="Genomic_DNA"/>
</dbReference>
<dbReference type="PIR" id="B55545">
    <property type="entry name" value="B55545"/>
</dbReference>
<dbReference type="SMR" id="Q47036"/>
<dbReference type="GO" id="GO:0003677">
    <property type="term" value="F:DNA binding"/>
    <property type="evidence" value="ECO:0007669"/>
    <property type="project" value="InterPro"/>
</dbReference>
<dbReference type="GO" id="GO:0015074">
    <property type="term" value="P:DNA integration"/>
    <property type="evidence" value="ECO:0007669"/>
    <property type="project" value="UniProtKB-KW"/>
</dbReference>
<dbReference type="GO" id="GO:0006310">
    <property type="term" value="P:DNA recombination"/>
    <property type="evidence" value="ECO:0007669"/>
    <property type="project" value="UniProtKB-KW"/>
</dbReference>
<dbReference type="CDD" id="cd00397">
    <property type="entry name" value="DNA_BRE_C"/>
    <property type="match status" value="1"/>
</dbReference>
<dbReference type="Gene3D" id="1.10.443.10">
    <property type="entry name" value="Intergrase catalytic core"/>
    <property type="match status" value="1"/>
</dbReference>
<dbReference type="InterPro" id="IPR011010">
    <property type="entry name" value="DNA_brk_join_enz"/>
</dbReference>
<dbReference type="InterPro" id="IPR013762">
    <property type="entry name" value="Integrase-like_cat_sf"/>
</dbReference>
<dbReference type="InterPro" id="IPR002104">
    <property type="entry name" value="Integrase_catalytic"/>
</dbReference>
<dbReference type="InterPro" id="IPR016423">
    <property type="entry name" value="Resolvase_Rsv"/>
</dbReference>
<dbReference type="InterPro" id="IPR050090">
    <property type="entry name" value="Tyrosine_recombinase_XerCD"/>
</dbReference>
<dbReference type="PANTHER" id="PTHR30349">
    <property type="entry name" value="PHAGE INTEGRASE-RELATED"/>
    <property type="match status" value="1"/>
</dbReference>
<dbReference type="PANTHER" id="PTHR30349:SF90">
    <property type="entry name" value="TYROSINE RECOMBINASE XERD"/>
    <property type="match status" value="1"/>
</dbReference>
<dbReference type="Pfam" id="PF00589">
    <property type="entry name" value="Phage_integrase"/>
    <property type="match status" value="1"/>
</dbReference>
<dbReference type="PIRSF" id="PIRSF004576">
    <property type="entry name" value="Resolvase_Rsv"/>
    <property type="match status" value="1"/>
</dbReference>
<dbReference type="SUPFAM" id="SSF56349">
    <property type="entry name" value="DNA breaking-rejoining enzymes"/>
    <property type="match status" value="1"/>
</dbReference>
<dbReference type="PROSITE" id="PS51898">
    <property type="entry name" value="TYR_RECOMBINASE"/>
    <property type="match status" value="1"/>
</dbReference>
<sequence length="246" mass="28108">MNNVIPLQNSPERVSLLPIAPGVDFATALSLRRMATSTGATPAYLLAPEVSALLFYMPDQRHHMLFATLWNTGMRIGEARIVTPESFDLDGVRPFVRVLSEKVRARRGRPPKDEVRLVPLTDISYVRQMESWMITTRPRRREPLWAVTDETMRNWLKQAVRRAEADGVHFSISVTPHTFRHSYIMHMLYHRQPRKVIQALAGHRDPRSMEVYTRVFALDMAATLAVPFTGDGRDAAEILRTLPPLK</sequence>
<comment type="similarity">
    <text evidence="2">Belongs to the 'phage' integrase family.</text>
</comment>
<keyword id="KW-0229">DNA integration</keyword>
<keyword id="KW-0233">DNA recombination</keyword>
<keyword id="KW-0614">Plasmid</keyword>
<keyword id="KW-0678">Repressor</keyword>
<keyword id="KW-0804">Transcription</keyword>
<keyword id="KW-0805">Transcription regulation</keyword>
<feature type="chain" id="PRO_0000197545" description="Probable site-specific recombinase in afa region">
    <location>
        <begin position="1"/>
        <end position="246"/>
    </location>
</feature>
<feature type="domain" description="Tyr recombinase" evidence="1">
    <location>
        <begin position="40"/>
        <end position="225"/>
    </location>
</feature>
<feature type="active site" evidence="1">
    <location>
        <position position="75"/>
    </location>
</feature>
<feature type="active site" evidence="1">
    <location>
        <position position="102"/>
    </location>
</feature>
<feature type="active site" evidence="1">
    <location>
        <position position="177"/>
    </location>
</feature>
<feature type="active site" evidence="1">
    <location>
        <position position="180"/>
    </location>
</feature>
<feature type="active site" evidence="1">
    <location>
        <position position="203"/>
    </location>
</feature>
<feature type="active site" description="O-(3'-phospho-DNA)-tyrosine intermediate" evidence="1">
    <location>
        <position position="212"/>
    </location>
</feature>